<evidence type="ECO:0000255" key="1">
    <source>
        <dbReference type="HAMAP-Rule" id="MF_01343"/>
    </source>
</evidence>
<evidence type="ECO:0000305" key="2"/>
<proteinExistence type="inferred from homology"/>
<gene>
    <name evidence="1" type="primary">rpsO</name>
    <name type="ordered locus">A1C_03565</name>
</gene>
<dbReference type="EMBL" id="CP000847">
    <property type="protein sequence ID" value="ABV74994.1"/>
    <property type="molecule type" value="Genomic_DNA"/>
</dbReference>
<dbReference type="RefSeq" id="WP_012149626.1">
    <property type="nucleotide sequence ID" value="NC_009881.1"/>
</dbReference>
<dbReference type="SMR" id="A8GNL9"/>
<dbReference type="STRING" id="293614.A1C_03565"/>
<dbReference type="KEGG" id="rak:A1C_03565"/>
<dbReference type="eggNOG" id="COG0184">
    <property type="taxonomic scope" value="Bacteria"/>
</dbReference>
<dbReference type="HOGENOM" id="CLU_148518_0_0_5"/>
<dbReference type="Proteomes" id="UP000006830">
    <property type="component" value="Chromosome"/>
</dbReference>
<dbReference type="GO" id="GO:0022627">
    <property type="term" value="C:cytosolic small ribosomal subunit"/>
    <property type="evidence" value="ECO:0007669"/>
    <property type="project" value="TreeGrafter"/>
</dbReference>
<dbReference type="GO" id="GO:0019843">
    <property type="term" value="F:rRNA binding"/>
    <property type="evidence" value="ECO:0007669"/>
    <property type="project" value="UniProtKB-UniRule"/>
</dbReference>
<dbReference type="GO" id="GO:0003735">
    <property type="term" value="F:structural constituent of ribosome"/>
    <property type="evidence" value="ECO:0007669"/>
    <property type="project" value="InterPro"/>
</dbReference>
<dbReference type="GO" id="GO:0006412">
    <property type="term" value="P:translation"/>
    <property type="evidence" value="ECO:0007669"/>
    <property type="project" value="UniProtKB-UniRule"/>
</dbReference>
<dbReference type="CDD" id="cd00353">
    <property type="entry name" value="Ribosomal_S15p_S13e"/>
    <property type="match status" value="1"/>
</dbReference>
<dbReference type="FunFam" id="1.10.287.10:FF:000002">
    <property type="entry name" value="30S ribosomal protein S15"/>
    <property type="match status" value="1"/>
</dbReference>
<dbReference type="Gene3D" id="6.10.250.3130">
    <property type="match status" value="1"/>
</dbReference>
<dbReference type="Gene3D" id="1.10.287.10">
    <property type="entry name" value="S15/NS1, RNA-binding"/>
    <property type="match status" value="1"/>
</dbReference>
<dbReference type="HAMAP" id="MF_01343_B">
    <property type="entry name" value="Ribosomal_uS15_B"/>
    <property type="match status" value="1"/>
</dbReference>
<dbReference type="InterPro" id="IPR000589">
    <property type="entry name" value="Ribosomal_uS15"/>
</dbReference>
<dbReference type="InterPro" id="IPR005290">
    <property type="entry name" value="Ribosomal_uS15_bac-type"/>
</dbReference>
<dbReference type="InterPro" id="IPR009068">
    <property type="entry name" value="uS15_NS1_RNA-bd_sf"/>
</dbReference>
<dbReference type="NCBIfam" id="TIGR00952">
    <property type="entry name" value="S15_bact"/>
    <property type="match status" value="1"/>
</dbReference>
<dbReference type="PANTHER" id="PTHR23321">
    <property type="entry name" value="RIBOSOMAL PROTEIN S15, BACTERIAL AND ORGANELLAR"/>
    <property type="match status" value="1"/>
</dbReference>
<dbReference type="PANTHER" id="PTHR23321:SF26">
    <property type="entry name" value="SMALL RIBOSOMAL SUBUNIT PROTEIN US15M"/>
    <property type="match status" value="1"/>
</dbReference>
<dbReference type="Pfam" id="PF00312">
    <property type="entry name" value="Ribosomal_S15"/>
    <property type="match status" value="1"/>
</dbReference>
<dbReference type="SMART" id="SM01387">
    <property type="entry name" value="Ribosomal_S15"/>
    <property type="match status" value="1"/>
</dbReference>
<dbReference type="SUPFAM" id="SSF47060">
    <property type="entry name" value="S15/NS1 RNA-binding domain"/>
    <property type="match status" value="1"/>
</dbReference>
<dbReference type="PROSITE" id="PS00362">
    <property type="entry name" value="RIBOSOMAL_S15"/>
    <property type="match status" value="1"/>
</dbReference>
<reference key="1">
    <citation type="submission" date="2007-09" db="EMBL/GenBank/DDBJ databases">
        <title>Complete genome sequence of Rickettsia akari.</title>
        <authorList>
            <person name="Madan A."/>
            <person name="Fahey J."/>
            <person name="Helton E."/>
            <person name="Ketteman M."/>
            <person name="Madan A."/>
            <person name="Rodrigues S."/>
            <person name="Sanchez A."/>
            <person name="Whiting M."/>
            <person name="Dasch G."/>
            <person name="Eremeeva M."/>
        </authorList>
    </citation>
    <scope>NUCLEOTIDE SEQUENCE [LARGE SCALE GENOMIC DNA]</scope>
    <source>
        <strain>Hartford</strain>
    </source>
</reference>
<organism>
    <name type="scientific">Rickettsia akari (strain Hartford)</name>
    <dbReference type="NCBI Taxonomy" id="293614"/>
    <lineage>
        <taxon>Bacteria</taxon>
        <taxon>Pseudomonadati</taxon>
        <taxon>Pseudomonadota</taxon>
        <taxon>Alphaproteobacteria</taxon>
        <taxon>Rickettsiales</taxon>
        <taxon>Rickettsiaceae</taxon>
        <taxon>Rickettsieae</taxon>
        <taxon>Rickettsia</taxon>
        <taxon>spotted fever group</taxon>
    </lineage>
</organism>
<accession>A8GNL9</accession>
<protein>
    <recommendedName>
        <fullName evidence="1">Small ribosomal subunit protein uS15</fullName>
    </recommendedName>
    <alternativeName>
        <fullName evidence="2">30S ribosomal protein S15</fullName>
    </alternativeName>
</protein>
<name>RS15_RICAH</name>
<keyword id="KW-0687">Ribonucleoprotein</keyword>
<keyword id="KW-0689">Ribosomal protein</keyword>
<keyword id="KW-0694">RNA-binding</keyword>
<keyword id="KW-0699">rRNA-binding</keyword>
<feature type="chain" id="PRO_1000054858" description="Small ribosomal subunit protein uS15">
    <location>
        <begin position="1"/>
        <end position="91"/>
    </location>
</feature>
<comment type="function">
    <text evidence="1">One of the primary rRNA binding proteins, it binds directly to 16S rRNA where it helps nucleate assembly of the platform of the 30S subunit by binding and bridging several RNA helices of the 16S rRNA.</text>
</comment>
<comment type="function">
    <text evidence="1">Forms an intersubunit bridge (bridge B4) with the 23S rRNA of the 50S subunit in the ribosome.</text>
</comment>
<comment type="subunit">
    <text evidence="1">Part of the 30S ribosomal subunit. Forms a bridge to the 50S subunit in the 70S ribosome, contacting the 23S rRNA.</text>
</comment>
<comment type="similarity">
    <text evidence="1">Belongs to the universal ribosomal protein uS15 family.</text>
</comment>
<sequence>MSITKERKQQLIKEYAITENDTGSSAVQCAILTERINNLTEHFKSNHKDHTSRRGLLVLVGRRRRLLNYIKKNSLSEYLDLISKLGIRKVK</sequence>